<sequence>MSAQPVDIQIFGRSLRVNCPPDQRDALNQAADDLNQRLQDLKVRTRVTNTEQLVFIAALNISYELTQEKAKTRDYAASMEQRIRMLQQTIEQALLDQGRITEKTGQNFE</sequence>
<accession>Q7CPU9</accession>
<organism>
    <name type="scientific">Salmonella typhimurium (strain LT2 / SGSC1412 / ATCC 700720)</name>
    <dbReference type="NCBI Taxonomy" id="99287"/>
    <lineage>
        <taxon>Bacteria</taxon>
        <taxon>Pseudomonadati</taxon>
        <taxon>Pseudomonadota</taxon>
        <taxon>Gammaproteobacteria</taxon>
        <taxon>Enterobacterales</taxon>
        <taxon>Enterobacteriaceae</taxon>
        <taxon>Salmonella</taxon>
    </lineage>
</organism>
<name>ZAPA_SALTY</name>
<comment type="function">
    <text evidence="1">Activator of cell division through the inhibition of FtsZ GTPase activity, therefore promoting FtsZ assembly into bundles of protofilaments necessary for the formation of the division Z ring. It is recruited early at mid-cell but it is not essential for cell division.</text>
</comment>
<comment type="subunit">
    <text evidence="1">Homodimer. Interacts with FtsZ.</text>
</comment>
<comment type="subcellular location">
    <subcellularLocation>
        <location evidence="1">Cytoplasm</location>
    </subcellularLocation>
    <text evidence="1">Localizes at mid-cell.</text>
</comment>
<comment type="similarity">
    <text evidence="1">Belongs to the ZapA family. Type 1 subfamily.</text>
</comment>
<dbReference type="EMBL" id="AE006468">
    <property type="protein sequence ID" value="AAL21935.1"/>
    <property type="molecule type" value="Genomic_DNA"/>
</dbReference>
<dbReference type="RefSeq" id="WP_001276011.1">
    <property type="nucleotide sequence ID" value="NC_003197.2"/>
</dbReference>
<dbReference type="SMR" id="Q7CPU9"/>
<dbReference type="STRING" id="99287.STM3060"/>
<dbReference type="PaxDb" id="99287-STM3060"/>
<dbReference type="GeneID" id="66757358"/>
<dbReference type="KEGG" id="stm:STM3060"/>
<dbReference type="PATRIC" id="fig|99287.12.peg.3242"/>
<dbReference type="HOGENOM" id="CLU_116623_3_0_6"/>
<dbReference type="OMA" id="NICYELH"/>
<dbReference type="PhylomeDB" id="Q7CPU9"/>
<dbReference type="BioCyc" id="SENT99287:STM3060-MONOMER"/>
<dbReference type="Proteomes" id="UP000001014">
    <property type="component" value="Chromosome"/>
</dbReference>
<dbReference type="GO" id="GO:0032153">
    <property type="term" value="C:cell division site"/>
    <property type="evidence" value="ECO:0000318"/>
    <property type="project" value="GO_Central"/>
</dbReference>
<dbReference type="GO" id="GO:0030428">
    <property type="term" value="C:cell septum"/>
    <property type="evidence" value="ECO:0000318"/>
    <property type="project" value="GO_Central"/>
</dbReference>
<dbReference type="GO" id="GO:0005829">
    <property type="term" value="C:cytosol"/>
    <property type="evidence" value="ECO:0000318"/>
    <property type="project" value="GO_Central"/>
</dbReference>
<dbReference type="GO" id="GO:0005886">
    <property type="term" value="C:plasma membrane"/>
    <property type="evidence" value="ECO:0007669"/>
    <property type="project" value="UniProtKB-UniRule"/>
</dbReference>
<dbReference type="GO" id="GO:0000917">
    <property type="term" value="P:division septum assembly"/>
    <property type="evidence" value="ECO:0000318"/>
    <property type="project" value="GO_Central"/>
</dbReference>
<dbReference type="GO" id="GO:0043093">
    <property type="term" value="P:FtsZ-dependent cytokinesis"/>
    <property type="evidence" value="ECO:0000318"/>
    <property type="project" value="GO_Central"/>
</dbReference>
<dbReference type="GO" id="GO:0000921">
    <property type="term" value="P:septin ring assembly"/>
    <property type="evidence" value="ECO:0000318"/>
    <property type="project" value="GO_Central"/>
</dbReference>
<dbReference type="FunFam" id="1.20.5.50:FF:000001">
    <property type="entry name" value="Cell division protein ZapA"/>
    <property type="match status" value="1"/>
</dbReference>
<dbReference type="FunFam" id="3.30.160.880:FF:000001">
    <property type="entry name" value="Cell division protein ZapA"/>
    <property type="match status" value="1"/>
</dbReference>
<dbReference type="Gene3D" id="1.20.5.50">
    <property type="match status" value="1"/>
</dbReference>
<dbReference type="Gene3D" id="3.30.160.880">
    <property type="entry name" value="Cell division protein ZapA protomer, N-terminal domain"/>
    <property type="match status" value="1"/>
</dbReference>
<dbReference type="HAMAP" id="MF_02012">
    <property type="entry name" value="ZapA_type1"/>
    <property type="match status" value="1"/>
</dbReference>
<dbReference type="InterPro" id="IPR007838">
    <property type="entry name" value="Cell_div_ZapA-like"/>
</dbReference>
<dbReference type="InterPro" id="IPR036192">
    <property type="entry name" value="Cell_div_ZapA-like_sf"/>
</dbReference>
<dbReference type="InterPro" id="IPR023771">
    <property type="entry name" value="Cell_div_ZapA_eubact"/>
</dbReference>
<dbReference type="InterPro" id="IPR042233">
    <property type="entry name" value="Cell_div_ZapA_N"/>
</dbReference>
<dbReference type="NCBIfam" id="NF008209">
    <property type="entry name" value="PRK10972.1"/>
    <property type="match status" value="1"/>
</dbReference>
<dbReference type="PANTHER" id="PTHR34981">
    <property type="entry name" value="CELL DIVISION PROTEIN ZAPA"/>
    <property type="match status" value="1"/>
</dbReference>
<dbReference type="PANTHER" id="PTHR34981:SF1">
    <property type="entry name" value="CELL DIVISION PROTEIN ZAPA"/>
    <property type="match status" value="1"/>
</dbReference>
<dbReference type="Pfam" id="PF05164">
    <property type="entry name" value="ZapA"/>
    <property type="match status" value="1"/>
</dbReference>
<dbReference type="SUPFAM" id="SSF102829">
    <property type="entry name" value="Cell division protein ZapA-like"/>
    <property type="match status" value="1"/>
</dbReference>
<evidence type="ECO:0000255" key="1">
    <source>
        <dbReference type="HAMAP-Rule" id="MF_02012"/>
    </source>
</evidence>
<protein>
    <recommendedName>
        <fullName evidence="1">Cell division protein ZapA</fullName>
    </recommendedName>
    <alternativeName>
        <fullName evidence="1">Z ring-associated protein ZapA</fullName>
    </alternativeName>
</protein>
<keyword id="KW-0131">Cell cycle</keyword>
<keyword id="KW-0132">Cell division</keyword>
<keyword id="KW-0175">Coiled coil</keyword>
<keyword id="KW-0963">Cytoplasm</keyword>
<keyword id="KW-1185">Reference proteome</keyword>
<keyword id="KW-0717">Septation</keyword>
<feature type="chain" id="PRO_0000345658" description="Cell division protein ZapA">
    <location>
        <begin position="1"/>
        <end position="109"/>
    </location>
</feature>
<feature type="coiled-coil region" evidence="1">
    <location>
        <begin position="21"/>
        <end position="97"/>
    </location>
</feature>
<gene>
    <name evidence="1" type="primary">zapA</name>
    <name type="ordered locus">STM3060</name>
</gene>
<reference key="1">
    <citation type="journal article" date="2001" name="Nature">
        <title>Complete genome sequence of Salmonella enterica serovar Typhimurium LT2.</title>
        <authorList>
            <person name="McClelland M."/>
            <person name="Sanderson K.E."/>
            <person name="Spieth J."/>
            <person name="Clifton S.W."/>
            <person name="Latreille P."/>
            <person name="Courtney L."/>
            <person name="Porwollik S."/>
            <person name="Ali J."/>
            <person name="Dante M."/>
            <person name="Du F."/>
            <person name="Hou S."/>
            <person name="Layman D."/>
            <person name="Leonard S."/>
            <person name="Nguyen C."/>
            <person name="Scott K."/>
            <person name="Holmes A."/>
            <person name="Grewal N."/>
            <person name="Mulvaney E."/>
            <person name="Ryan E."/>
            <person name="Sun H."/>
            <person name="Florea L."/>
            <person name="Miller W."/>
            <person name="Stoneking T."/>
            <person name="Nhan M."/>
            <person name="Waterston R."/>
            <person name="Wilson R.K."/>
        </authorList>
    </citation>
    <scope>NUCLEOTIDE SEQUENCE [LARGE SCALE GENOMIC DNA]</scope>
    <source>
        <strain>LT2 / SGSC1412 / ATCC 700720</strain>
    </source>
</reference>
<proteinExistence type="inferred from homology"/>